<proteinExistence type="inferred from homology"/>
<name>THIE_MYCSJ</name>
<comment type="function">
    <text evidence="1">Condenses 4-methyl-5-(beta-hydroxyethyl)thiazole monophosphate (THZ-P) and 2-methyl-4-amino-5-hydroxymethyl pyrimidine pyrophosphate (HMP-PP) to form thiamine monophosphate (TMP).</text>
</comment>
<comment type="catalytic activity">
    <reaction evidence="1">
        <text>2-[(2R,5Z)-2-carboxy-4-methylthiazol-5(2H)-ylidene]ethyl phosphate + 4-amino-2-methyl-5-(diphosphooxymethyl)pyrimidine + 2 H(+) = thiamine phosphate + CO2 + diphosphate</text>
        <dbReference type="Rhea" id="RHEA:47844"/>
        <dbReference type="ChEBI" id="CHEBI:15378"/>
        <dbReference type="ChEBI" id="CHEBI:16526"/>
        <dbReference type="ChEBI" id="CHEBI:33019"/>
        <dbReference type="ChEBI" id="CHEBI:37575"/>
        <dbReference type="ChEBI" id="CHEBI:57841"/>
        <dbReference type="ChEBI" id="CHEBI:62899"/>
        <dbReference type="EC" id="2.5.1.3"/>
    </reaction>
</comment>
<comment type="catalytic activity">
    <reaction evidence="1">
        <text>2-(2-carboxy-4-methylthiazol-5-yl)ethyl phosphate + 4-amino-2-methyl-5-(diphosphooxymethyl)pyrimidine + 2 H(+) = thiamine phosphate + CO2 + diphosphate</text>
        <dbReference type="Rhea" id="RHEA:47848"/>
        <dbReference type="ChEBI" id="CHEBI:15378"/>
        <dbReference type="ChEBI" id="CHEBI:16526"/>
        <dbReference type="ChEBI" id="CHEBI:33019"/>
        <dbReference type="ChEBI" id="CHEBI:37575"/>
        <dbReference type="ChEBI" id="CHEBI:57841"/>
        <dbReference type="ChEBI" id="CHEBI:62890"/>
        <dbReference type="EC" id="2.5.1.3"/>
    </reaction>
</comment>
<comment type="catalytic activity">
    <reaction evidence="1">
        <text>4-methyl-5-(2-phosphooxyethyl)-thiazole + 4-amino-2-methyl-5-(diphosphooxymethyl)pyrimidine + H(+) = thiamine phosphate + diphosphate</text>
        <dbReference type="Rhea" id="RHEA:22328"/>
        <dbReference type="ChEBI" id="CHEBI:15378"/>
        <dbReference type="ChEBI" id="CHEBI:33019"/>
        <dbReference type="ChEBI" id="CHEBI:37575"/>
        <dbReference type="ChEBI" id="CHEBI:57841"/>
        <dbReference type="ChEBI" id="CHEBI:58296"/>
        <dbReference type="EC" id="2.5.1.3"/>
    </reaction>
</comment>
<comment type="cofactor">
    <cofactor evidence="1">
        <name>Mg(2+)</name>
        <dbReference type="ChEBI" id="CHEBI:18420"/>
    </cofactor>
    <text evidence="1">Binds 1 Mg(2+) ion per subunit.</text>
</comment>
<comment type="pathway">
    <text evidence="1">Cofactor biosynthesis; thiamine diphosphate biosynthesis; thiamine phosphate from 4-amino-2-methyl-5-diphosphomethylpyrimidine and 4-methyl-5-(2-phosphoethyl)-thiazole: step 1/1.</text>
</comment>
<comment type="similarity">
    <text evidence="1">Belongs to the thiamine-phosphate synthase family.</text>
</comment>
<reference key="1">
    <citation type="submission" date="2007-02" db="EMBL/GenBank/DDBJ databases">
        <title>Complete sequence of Mycobacterium sp. JLS.</title>
        <authorList>
            <consortium name="US DOE Joint Genome Institute"/>
            <person name="Copeland A."/>
            <person name="Lucas S."/>
            <person name="Lapidus A."/>
            <person name="Barry K."/>
            <person name="Detter J.C."/>
            <person name="Glavina del Rio T."/>
            <person name="Hammon N."/>
            <person name="Israni S."/>
            <person name="Dalin E."/>
            <person name="Tice H."/>
            <person name="Pitluck S."/>
            <person name="Chain P."/>
            <person name="Malfatti S."/>
            <person name="Shin M."/>
            <person name="Vergez L."/>
            <person name="Schmutz J."/>
            <person name="Larimer F."/>
            <person name="Land M."/>
            <person name="Hauser L."/>
            <person name="Kyrpides N."/>
            <person name="Mikhailova N."/>
            <person name="Miller C.D."/>
            <person name="Anderson A.J."/>
            <person name="Sims R.C."/>
            <person name="Richardson P."/>
        </authorList>
    </citation>
    <scope>NUCLEOTIDE SEQUENCE [LARGE SCALE GENOMIC DNA]</scope>
    <source>
        <strain>JLS</strain>
    </source>
</reference>
<dbReference type="EC" id="2.5.1.3" evidence="1"/>
<dbReference type="EMBL" id="CP000580">
    <property type="protein sequence ID" value="ABN96346.1"/>
    <property type="molecule type" value="Genomic_DNA"/>
</dbReference>
<dbReference type="SMR" id="A3PTW9"/>
<dbReference type="KEGG" id="mjl:Mjls_0534"/>
<dbReference type="HOGENOM" id="CLU_018272_3_0_11"/>
<dbReference type="BioCyc" id="MSP164757:G1G8C-541-MONOMER"/>
<dbReference type="UniPathway" id="UPA00060">
    <property type="reaction ID" value="UER00141"/>
</dbReference>
<dbReference type="GO" id="GO:0005737">
    <property type="term" value="C:cytoplasm"/>
    <property type="evidence" value="ECO:0007669"/>
    <property type="project" value="TreeGrafter"/>
</dbReference>
<dbReference type="GO" id="GO:0000287">
    <property type="term" value="F:magnesium ion binding"/>
    <property type="evidence" value="ECO:0007669"/>
    <property type="project" value="UniProtKB-UniRule"/>
</dbReference>
<dbReference type="GO" id="GO:0004789">
    <property type="term" value="F:thiamine-phosphate diphosphorylase activity"/>
    <property type="evidence" value="ECO:0007669"/>
    <property type="project" value="UniProtKB-UniRule"/>
</dbReference>
<dbReference type="GO" id="GO:0009228">
    <property type="term" value="P:thiamine biosynthetic process"/>
    <property type="evidence" value="ECO:0007669"/>
    <property type="project" value="UniProtKB-KW"/>
</dbReference>
<dbReference type="GO" id="GO:0009229">
    <property type="term" value="P:thiamine diphosphate biosynthetic process"/>
    <property type="evidence" value="ECO:0007669"/>
    <property type="project" value="UniProtKB-UniRule"/>
</dbReference>
<dbReference type="CDD" id="cd00564">
    <property type="entry name" value="TMP_TenI"/>
    <property type="match status" value="1"/>
</dbReference>
<dbReference type="FunFam" id="3.20.20.70:FF:000178">
    <property type="entry name" value="Thiamine-phosphate synthase"/>
    <property type="match status" value="1"/>
</dbReference>
<dbReference type="Gene3D" id="3.20.20.70">
    <property type="entry name" value="Aldolase class I"/>
    <property type="match status" value="1"/>
</dbReference>
<dbReference type="HAMAP" id="MF_00097">
    <property type="entry name" value="TMP_synthase"/>
    <property type="match status" value="1"/>
</dbReference>
<dbReference type="InterPro" id="IPR013785">
    <property type="entry name" value="Aldolase_TIM"/>
</dbReference>
<dbReference type="InterPro" id="IPR036206">
    <property type="entry name" value="ThiamineP_synth_sf"/>
</dbReference>
<dbReference type="InterPro" id="IPR022998">
    <property type="entry name" value="ThiamineP_synth_TenI"/>
</dbReference>
<dbReference type="InterPro" id="IPR034291">
    <property type="entry name" value="TMP_synthase"/>
</dbReference>
<dbReference type="NCBIfam" id="TIGR00693">
    <property type="entry name" value="thiE"/>
    <property type="match status" value="1"/>
</dbReference>
<dbReference type="PANTHER" id="PTHR20857">
    <property type="entry name" value="THIAMINE-PHOSPHATE PYROPHOSPHORYLASE"/>
    <property type="match status" value="1"/>
</dbReference>
<dbReference type="PANTHER" id="PTHR20857:SF15">
    <property type="entry name" value="THIAMINE-PHOSPHATE SYNTHASE"/>
    <property type="match status" value="1"/>
</dbReference>
<dbReference type="Pfam" id="PF02581">
    <property type="entry name" value="TMP-TENI"/>
    <property type="match status" value="1"/>
</dbReference>
<dbReference type="SUPFAM" id="SSF51391">
    <property type="entry name" value="Thiamin phosphate synthase"/>
    <property type="match status" value="1"/>
</dbReference>
<protein>
    <recommendedName>
        <fullName evidence="1">Thiamine-phosphate synthase</fullName>
        <shortName evidence="1">TP synthase</shortName>
        <shortName evidence="1">TPS</shortName>
        <ecNumber evidence="1">2.5.1.3</ecNumber>
    </recommendedName>
    <alternativeName>
        <fullName evidence="1">Thiamine-phosphate pyrophosphorylase</fullName>
        <shortName evidence="1">TMP pyrophosphorylase</shortName>
        <shortName evidence="1">TMP-PPase</shortName>
    </alternativeName>
</protein>
<sequence>MREPLDPLGPALAQASLYLCTDARRERGDLAEFADAALAGGVDLIQLRDKGSAGERRFGPLEAREELAALEILAEAARRRGALLAVNDRADIALAAGADVLHLGQDDLPLPVARRIIGPRPLIGRSTHDSAQVSAAVAEEVDYFCVGPCWPTPTKPGREAPGLGLVREVASRATEKPWFAIGGIDEARLPEVLDAGARRIVVVRAITAADDPKAAARRLKDALVSR</sequence>
<feature type="chain" id="PRO_0000336409" description="Thiamine-phosphate synthase">
    <location>
        <begin position="1"/>
        <end position="226"/>
    </location>
</feature>
<feature type="binding site" evidence="1">
    <location>
        <begin position="46"/>
        <end position="50"/>
    </location>
    <ligand>
        <name>4-amino-2-methyl-5-(diphosphooxymethyl)pyrimidine</name>
        <dbReference type="ChEBI" id="CHEBI:57841"/>
    </ligand>
</feature>
<feature type="binding site" evidence="1">
    <location>
        <position position="87"/>
    </location>
    <ligand>
        <name>4-amino-2-methyl-5-(diphosphooxymethyl)pyrimidine</name>
        <dbReference type="ChEBI" id="CHEBI:57841"/>
    </ligand>
</feature>
<feature type="binding site" evidence="1">
    <location>
        <position position="88"/>
    </location>
    <ligand>
        <name>Mg(2+)</name>
        <dbReference type="ChEBI" id="CHEBI:18420"/>
    </ligand>
</feature>
<feature type="binding site" evidence="1">
    <location>
        <position position="107"/>
    </location>
    <ligand>
        <name>Mg(2+)</name>
        <dbReference type="ChEBI" id="CHEBI:18420"/>
    </ligand>
</feature>
<feature type="binding site" evidence="1">
    <location>
        <position position="126"/>
    </location>
    <ligand>
        <name>4-amino-2-methyl-5-(diphosphooxymethyl)pyrimidine</name>
        <dbReference type="ChEBI" id="CHEBI:57841"/>
    </ligand>
</feature>
<feature type="binding site" evidence="1">
    <location>
        <begin position="152"/>
        <end position="154"/>
    </location>
    <ligand>
        <name>2-[(2R,5Z)-2-carboxy-4-methylthiazol-5(2H)-ylidene]ethyl phosphate</name>
        <dbReference type="ChEBI" id="CHEBI:62899"/>
    </ligand>
</feature>
<feature type="binding site" evidence="1">
    <location>
        <position position="155"/>
    </location>
    <ligand>
        <name>4-amino-2-methyl-5-(diphosphooxymethyl)pyrimidine</name>
        <dbReference type="ChEBI" id="CHEBI:57841"/>
    </ligand>
</feature>
<feature type="binding site" evidence="1">
    <location>
        <position position="183"/>
    </location>
    <ligand>
        <name>2-[(2R,5Z)-2-carboxy-4-methylthiazol-5(2H)-ylidene]ethyl phosphate</name>
        <dbReference type="ChEBI" id="CHEBI:62899"/>
    </ligand>
</feature>
<evidence type="ECO:0000255" key="1">
    <source>
        <dbReference type="HAMAP-Rule" id="MF_00097"/>
    </source>
</evidence>
<gene>
    <name evidence="1" type="primary">thiE</name>
    <name type="ordered locus">Mjls_0534</name>
</gene>
<keyword id="KW-0460">Magnesium</keyword>
<keyword id="KW-0479">Metal-binding</keyword>
<keyword id="KW-0784">Thiamine biosynthesis</keyword>
<keyword id="KW-0808">Transferase</keyword>
<accession>A3PTW9</accession>
<organism>
    <name type="scientific">Mycobacterium sp. (strain JLS)</name>
    <dbReference type="NCBI Taxonomy" id="164757"/>
    <lineage>
        <taxon>Bacteria</taxon>
        <taxon>Bacillati</taxon>
        <taxon>Actinomycetota</taxon>
        <taxon>Actinomycetes</taxon>
        <taxon>Mycobacteriales</taxon>
        <taxon>Mycobacteriaceae</taxon>
        <taxon>Mycobacterium</taxon>
    </lineage>
</organism>